<dbReference type="EMBL" id="CP001217">
    <property type="protein sequence ID" value="ACJ08425.1"/>
    <property type="molecule type" value="Genomic_DNA"/>
</dbReference>
<dbReference type="SMR" id="B6JNE7"/>
<dbReference type="KEGG" id="hpp:HPP12_1273"/>
<dbReference type="HOGENOM" id="CLU_095071_2_1_7"/>
<dbReference type="Proteomes" id="UP000008198">
    <property type="component" value="Chromosome"/>
</dbReference>
<dbReference type="GO" id="GO:0022625">
    <property type="term" value="C:cytosolic large ribosomal subunit"/>
    <property type="evidence" value="ECO:0007669"/>
    <property type="project" value="TreeGrafter"/>
</dbReference>
<dbReference type="GO" id="GO:0070180">
    <property type="term" value="F:large ribosomal subunit rRNA binding"/>
    <property type="evidence" value="ECO:0007669"/>
    <property type="project" value="TreeGrafter"/>
</dbReference>
<dbReference type="GO" id="GO:0003735">
    <property type="term" value="F:structural constituent of ribosome"/>
    <property type="evidence" value="ECO:0007669"/>
    <property type="project" value="InterPro"/>
</dbReference>
<dbReference type="GO" id="GO:0006412">
    <property type="term" value="P:translation"/>
    <property type="evidence" value="ECO:0007669"/>
    <property type="project" value="UniProtKB-UniRule"/>
</dbReference>
<dbReference type="CDD" id="cd00337">
    <property type="entry name" value="Ribosomal_uL14"/>
    <property type="match status" value="1"/>
</dbReference>
<dbReference type="FunFam" id="2.40.150.20:FF:000001">
    <property type="entry name" value="50S ribosomal protein L14"/>
    <property type="match status" value="1"/>
</dbReference>
<dbReference type="Gene3D" id="2.40.150.20">
    <property type="entry name" value="Ribosomal protein L14"/>
    <property type="match status" value="1"/>
</dbReference>
<dbReference type="HAMAP" id="MF_01367">
    <property type="entry name" value="Ribosomal_uL14"/>
    <property type="match status" value="1"/>
</dbReference>
<dbReference type="InterPro" id="IPR000218">
    <property type="entry name" value="Ribosomal_uL14"/>
</dbReference>
<dbReference type="InterPro" id="IPR005745">
    <property type="entry name" value="Ribosomal_uL14_bac-type"/>
</dbReference>
<dbReference type="InterPro" id="IPR019972">
    <property type="entry name" value="Ribosomal_uL14_CS"/>
</dbReference>
<dbReference type="InterPro" id="IPR036853">
    <property type="entry name" value="Ribosomal_uL14_sf"/>
</dbReference>
<dbReference type="NCBIfam" id="TIGR01067">
    <property type="entry name" value="rplN_bact"/>
    <property type="match status" value="1"/>
</dbReference>
<dbReference type="PANTHER" id="PTHR11761">
    <property type="entry name" value="50S/60S RIBOSOMAL PROTEIN L14/L23"/>
    <property type="match status" value="1"/>
</dbReference>
<dbReference type="PANTHER" id="PTHR11761:SF3">
    <property type="entry name" value="LARGE RIBOSOMAL SUBUNIT PROTEIN UL14M"/>
    <property type="match status" value="1"/>
</dbReference>
<dbReference type="Pfam" id="PF00238">
    <property type="entry name" value="Ribosomal_L14"/>
    <property type="match status" value="1"/>
</dbReference>
<dbReference type="SMART" id="SM01374">
    <property type="entry name" value="Ribosomal_L14"/>
    <property type="match status" value="1"/>
</dbReference>
<dbReference type="SUPFAM" id="SSF50193">
    <property type="entry name" value="Ribosomal protein L14"/>
    <property type="match status" value="1"/>
</dbReference>
<dbReference type="PROSITE" id="PS00049">
    <property type="entry name" value="RIBOSOMAL_L14"/>
    <property type="match status" value="1"/>
</dbReference>
<reference key="1">
    <citation type="submission" date="2008-10" db="EMBL/GenBank/DDBJ databases">
        <title>The complete genome sequence of Helicobacter pylori strain P12.</title>
        <authorList>
            <person name="Fischer W."/>
            <person name="Windhager L."/>
            <person name="Karnholz A."/>
            <person name="Zeiller M."/>
            <person name="Zimmer R."/>
            <person name="Haas R."/>
        </authorList>
    </citation>
    <scope>NUCLEOTIDE SEQUENCE [LARGE SCALE GENOMIC DNA]</scope>
    <source>
        <strain>P12</strain>
    </source>
</reference>
<keyword id="KW-0687">Ribonucleoprotein</keyword>
<keyword id="KW-0689">Ribosomal protein</keyword>
<keyword id="KW-0694">RNA-binding</keyword>
<keyword id="KW-0699">rRNA-binding</keyword>
<proteinExistence type="inferred from homology"/>
<name>RL14_HELP2</name>
<sequence>MIQSFTRLNVADNSGAKEIMCIKVLGGSHKRYASVGSVIVASVKKAIPNGKVKRGQVVKAVVVRTKKEIQRKNGSLVRFDDNAAVILDAKKDPVGTRIFGPVSREVRYANFMKIISLAPELYNEKRNQKK</sequence>
<evidence type="ECO:0000255" key="1">
    <source>
        <dbReference type="HAMAP-Rule" id="MF_01367"/>
    </source>
</evidence>
<evidence type="ECO:0000305" key="2"/>
<accession>B6JNE7</accession>
<organism>
    <name type="scientific">Helicobacter pylori (strain P12)</name>
    <dbReference type="NCBI Taxonomy" id="570508"/>
    <lineage>
        <taxon>Bacteria</taxon>
        <taxon>Pseudomonadati</taxon>
        <taxon>Campylobacterota</taxon>
        <taxon>Epsilonproteobacteria</taxon>
        <taxon>Campylobacterales</taxon>
        <taxon>Helicobacteraceae</taxon>
        <taxon>Helicobacter</taxon>
    </lineage>
</organism>
<comment type="function">
    <text evidence="1">Binds to 23S rRNA. Forms part of two intersubunit bridges in the 70S ribosome.</text>
</comment>
<comment type="subunit">
    <text evidence="1">Part of the 50S ribosomal subunit. Forms a cluster with proteins L3 and L19. In the 70S ribosome, L14 and L19 interact and together make contacts with the 16S rRNA in bridges B5 and B8.</text>
</comment>
<comment type="similarity">
    <text evidence="1">Belongs to the universal ribosomal protein uL14 family.</text>
</comment>
<feature type="chain" id="PRO_1000144281" description="Large ribosomal subunit protein uL14">
    <location>
        <begin position="1"/>
        <end position="130"/>
    </location>
</feature>
<protein>
    <recommendedName>
        <fullName evidence="1">Large ribosomal subunit protein uL14</fullName>
    </recommendedName>
    <alternativeName>
        <fullName evidence="2">50S ribosomal protein L14</fullName>
    </alternativeName>
</protein>
<gene>
    <name evidence="1" type="primary">rplN</name>
    <name type="ordered locus">HPP12_1273</name>
</gene>